<name>TATB_MYCSS</name>
<evidence type="ECO:0000255" key="1">
    <source>
        <dbReference type="HAMAP-Rule" id="MF_00237"/>
    </source>
</evidence>
<evidence type="ECO:0000256" key="2">
    <source>
        <dbReference type="SAM" id="MobiDB-lite"/>
    </source>
</evidence>
<protein>
    <recommendedName>
        <fullName evidence="1">Sec-independent protein translocase protein TatB</fullName>
    </recommendedName>
</protein>
<sequence>MFANIGWGEMLILVIAGLVILGPERLPGAIRWTSNALRQARDYVSGATTQLRQDFGPEFEDLREPITELQKLRGMTPRAALTKHLLDGDDSFFTGKFDQQNGKPAAGQEKPVTPVNPPVTATPPSESTATPFDSDAT</sequence>
<reference key="1">
    <citation type="submission" date="2006-06" db="EMBL/GenBank/DDBJ databases">
        <title>Complete sequence of chromosome of Mycobacterium sp. MCS.</title>
        <authorList>
            <consortium name="US DOE Joint Genome Institute"/>
            <person name="Copeland A."/>
            <person name="Lucas S."/>
            <person name="Lapidus A."/>
            <person name="Barry K."/>
            <person name="Detter J.C."/>
            <person name="Glavina del Rio T."/>
            <person name="Hammon N."/>
            <person name="Israni S."/>
            <person name="Dalin E."/>
            <person name="Tice H."/>
            <person name="Pitluck S."/>
            <person name="Martinez M."/>
            <person name="Schmutz J."/>
            <person name="Larimer F."/>
            <person name="Land M."/>
            <person name="Hauser L."/>
            <person name="Kyrpides N."/>
            <person name="Kim E."/>
            <person name="Miller C.D."/>
            <person name="Hughes J.E."/>
            <person name="Anderson A.J."/>
            <person name="Sims R.C."/>
            <person name="Richardson P."/>
        </authorList>
    </citation>
    <scope>NUCLEOTIDE SEQUENCE [LARGE SCALE GENOMIC DNA]</scope>
    <source>
        <strain>MCS</strain>
    </source>
</reference>
<comment type="function">
    <text evidence="1">Part of the twin-arginine translocation (Tat) system that transports large folded proteins containing a characteristic twin-arginine motif in their signal peptide across membranes. Together with TatC, TatB is part of a receptor directly interacting with Tat signal peptides. TatB may form an oligomeric binding site that transiently accommodates folded Tat precursor proteins before their translocation.</text>
</comment>
<comment type="subunit">
    <text evidence="1">The Tat system comprises two distinct complexes: a TatABC complex, containing multiple copies of TatA, TatB and TatC subunits, and a separate TatA complex, containing only TatA subunits. Substrates initially bind to the TatABC complex, which probably triggers association of the separate TatA complex to form the active translocon.</text>
</comment>
<comment type="subcellular location">
    <subcellularLocation>
        <location evidence="1">Cell membrane</location>
        <topology evidence="1">Single-pass membrane protein</topology>
    </subcellularLocation>
</comment>
<comment type="similarity">
    <text evidence="1">Belongs to the TatB family.</text>
</comment>
<keyword id="KW-1003">Cell membrane</keyword>
<keyword id="KW-0472">Membrane</keyword>
<keyword id="KW-0653">Protein transport</keyword>
<keyword id="KW-0811">Translocation</keyword>
<keyword id="KW-0812">Transmembrane</keyword>
<keyword id="KW-1133">Transmembrane helix</keyword>
<keyword id="KW-0813">Transport</keyword>
<organism>
    <name type="scientific">Mycobacterium sp. (strain MCS)</name>
    <dbReference type="NCBI Taxonomy" id="164756"/>
    <lineage>
        <taxon>Bacteria</taxon>
        <taxon>Bacillati</taxon>
        <taxon>Actinomycetota</taxon>
        <taxon>Actinomycetes</taxon>
        <taxon>Mycobacteriales</taxon>
        <taxon>Mycobacteriaceae</taxon>
        <taxon>Mycobacterium</taxon>
    </lineage>
</organism>
<gene>
    <name evidence="1" type="primary">tatB</name>
    <name type="ordered locus">Mmcs_3991</name>
</gene>
<accession>Q1B4T8</accession>
<dbReference type="EMBL" id="CP000384">
    <property type="protein sequence ID" value="ABG10096.1"/>
    <property type="molecule type" value="Genomic_DNA"/>
</dbReference>
<dbReference type="SMR" id="Q1B4T8"/>
<dbReference type="KEGG" id="mmc:Mmcs_3991"/>
<dbReference type="HOGENOM" id="CLU_086034_2_0_11"/>
<dbReference type="BioCyc" id="MSP164756:G1G6O-4076-MONOMER"/>
<dbReference type="GO" id="GO:0033281">
    <property type="term" value="C:TAT protein transport complex"/>
    <property type="evidence" value="ECO:0007669"/>
    <property type="project" value="UniProtKB-UniRule"/>
</dbReference>
<dbReference type="GO" id="GO:0008320">
    <property type="term" value="F:protein transmembrane transporter activity"/>
    <property type="evidence" value="ECO:0007669"/>
    <property type="project" value="UniProtKB-UniRule"/>
</dbReference>
<dbReference type="GO" id="GO:0043953">
    <property type="term" value="P:protein transport by the Tat complex"/>
    <property type="evidence" value="ECO:0007669"/>
    <property type="project" value="UniProtKB-UniRule"/>
</dbReference>
<dbReference type="Gene3D" id="1.20.5.3310">
    <property type="match status" value="1"/>
</dbReference>
<dbReference type="HAMAP" id="MF_00237">
    <property type="entry name" value="TatB"/>
    <property type="match status" value="1"/>
</dbReference>
<dbReference type="InterPro" id="IPR018448">
    <property type="entry name" value="TatB"/>
</dbReference>
<dbReference type="NCBIfam" id="TIGR01410">
    <property type="entry name" value="tatB"/>
    <property type="match status" value="1"/>
</dbReference>
<dbReference type="PRINTS" id="PR01506">
    <property type="entry name" value="TATBPROTEIN"/>
</dbReference>
<feature type="chain" id="PRO_0000301191" description="Sec-independent protein translocase protein TatB">
    <location>
        <begin position="1"/>
        <end position="137"/>
    </location>
</feature>
<feature type="transmembrane region" description="Helical" evidence="1">
    <location>
        <begin position="2"/>
        <end position="22"/>
    </location>
</feature>
<feature type="region of interest" description="Disordered" evidence="2">
    <location>
        <begin position="92"/>
        <end position="137"/>
    </location>
</feature>
<feature type="compositionally biased region" description="Low complexity" evidence="2">
    <location>
        <begin position="122"/>
        <end position="131"/>
    </location>
</feature>
<proteinExistence type="inferred from homology"/>